<gene>
    <name type="primary">ramS</name>
    <name type="ordered locus">SCO6682</name>
    <name type="ORF">SC5A7.32</name>
</gene>
<feature type="chain" id="PRO_0000445470" description="Lanthionine-containing peptide SapB precursor RamS">
    <location>
        <begin position="1"/>
        <end position="42"/>
    </location>
</feature>
<feature type="propeptide" id="PRO_0000445471" evidence="4 6">
    <location>
        <begin position="1"/>
        <end position="21"/>
    </location>
</feature>
<feature type="peptide" id="PRO_0000342631" description="Lanthionine-containing peptide SapB">
    <location>
        <begin position="22"/>
        <end position="42"/>
    </location>
</feature>
<feature type="region of interest" description="Disordered" evidence="1">
    <location>
        <begin position="1"/>
        <end position="21"/>
    </location>
</feature>
<feature type="modified residue" description="2,3-didehydroalanine (Ser)" evidence="4">
    <location>
        <position position="27"/>
    </location>
</feature>
<feature type="modified residue" description="2,3-didehydroalanine (Ser)" evidence="4">
    <location>
        <position position="37"/>
    </location>
</feature>
<feature type="cross-link" description="Lanthionine (Ser-Cys)" evidence="4">
    <location>
        <begin position="24"/>
        <end position="31"/>
    </location>
</feature>
<feature type="cross-link" description="Lanthionine (Ser-Cys)" evidence="4">
    <location>
        <begin position="34"/>
        <end position="41"/>
    </location>
</feature>
<proteinExistence type="evidence at protein level"/>
<name>LANSB_STRCO</name>
<protein>
    <recommendedName>
        <fullName evidence="13">Lanthionine-containing peptide SapB precursor RamS</fullName>
    </recommendedName>
    <alternativeName>
        <fullName evidence="13">ProSapB</fullName>
    </alternativeName>
    <component>
        <recommendedName>
            <fullName evidence="11">Lanthionine-containing peptide SapB</fullName>
        </recommendedName>
        <alternativeName>
            <fullName evidence="12">Morphogen SapB</fullName>
        </alternativeName>
        <alternativeName>
            <fullName>Rapid aerial mycelium protein S</fullName>
        </alternativeName>
        <alternativeName>
            <fullName evidence="14">Spore-associated protein B</fullName>
        </alternativeName>
    </component>
</protein>
<comment type="function">
    <molecule>Lanthionine-containing peptide SapB precursor RamS</molecule>
    <text evidence="8">Stably accumulated precursor of SapB (PubMed:22486809).</text>
</comment>
<comment type="function">
    <molecule>Lanthionine-containing peptide SapB</molecule>
    <text evidence="4 5 6 10 18">Lanthionine-containing peptide devoid of antibiotic properties (PubMed:15277670). A surface active peptide involved in the efficient formation of aerial mycelium when cells are grown in rich media. Has an overlapping function with the surface-active chaplin proteins; chaplins are essential on minimal medium while on rich medium both chaplins and SapB are required for efficient aerial hyphae formation (PubMed:17462011). Required under conditions of high osmolarity where it may change the physical properties of the chaplin layer to allow hyphae to grow into air (Probable). Suggested to self-assemble at air-water interfaces, thus providing a film of surfactant through which nascent aerial hyphae can emerge; the aerial hyphae differentiate further into spores (PubMed:2032288). Application to bald mutants (bld, unable to make aerial hyphae) restores hyphae growth (PubMed:2032288, PubMed:9822824). Application to chaplin negative mutants as well as ramC-ramS-ramA-ramB and ramR deletions also restores aerial hyphae growth and sporulation (PubMed:17462011). Reduces surface tension of water from 72 to 30 mJ/m(2) (PubMed:9822824).</text>
</comment>
<comment type="subcellular location">
    <molecule>Lanthionine-containing peptide SapB precursor RamS</molecule>
    <subcellularLocation>
        <location evidence="8">Cell membrane</location>
    </subcellularLocation>
    <text evidence="8">RamS precursor protein (detected by an anti-propeptide antibody and by a C-terminal His-tag) is associated with the cell membrane in a non ramR-dependent fashion (PubMed:22486809).</text>
</comment>
<comment type="subcellular location">
    <molecule>Lanthionine-containing peptide SapB</molecule>
    <subcellularLocation>
        <location evidence="6 7">Secreted</location>
    </subcellularLocation>
    <subcellularLocation>
        <location evidence="7 9 10 17">Spore wall</location>
    </subcellularLocation>
    <text evidence="6 7">Present in a zone around colonies undergoing aerial hyphae formation and around spores (PubMed:2032288). Expression levels are media-dependent; well expressed in spores grown on rich R5, about 4-fold less on rich MS and less again on minimal mannitol media. Secreted in rich R5 but not in minimal mannitol media (PubMed:22309453).</text>
</comment>
<comment type="developmental stage">
    <text evidence="6 7 9 10">Starts to be expressed as aerial mycelium forms on rich solid medium after 3 days growth and in spores; only forms during growth on solid medium (PubMed:2032288, PubMed:2450872). Strongly expressed in spores (PubMed:2450872, PubMed:9822824). Most strongly expressed in spores from rich R5 media, less well in rich MS and even less well on minimal mannitol media (at protein level) (PubMed:22309453).</text>
</comment>
<comment type="induction">
    <text evidence="2 3 5 6 7 8">The RamS precursor protein (detected by an anti-propeptide antibody and by a C-terminal His-tag) is detected from at least 16 hours post-germination on both rich and minimal media and is detected for at least 52 hours (at protein level) (PubMed:22486809). The mature lanthionine-containing peptide SapB is expressed by 3 days growth on rich medium, expression increases slightly over 7 days (at protein level). Expression requires ramR, not expressed in minimal medium (at protein level) (PubMed:12453210). Not synthesized in bld mutants (blocked in aerial hyphae formation), synthesized in whi mutants (spore formation is prevented) (at protein level) (PubMed:2032288). SapB is expressed on rich but not minimal medium (at protein level) (PubMed:17462011, PubMed:2032288). However it is expressed after 6 days growth on minimal medium in a chaplin-negative strain (at protein level) (PubMed:17462011). Induced by growth on osmolytes; slight induction by 10% sucrose, more strongly induced by 0.5 M KCl (at protein level) (PubMed:22309453). Probably part of the ramC-ramS-ramA-ramB operon (PubMed:12100547, PubMed:12453210). Also has its own, ramR-independent promoter. On both rich and minimal medium transcription is constitutive, rising to a plateau about 24 hours post-germination on all media; unaffected by ramR disruption (PubMed:22486809).</text>
</comment>
<comment type="PTM">
    <text evidence="4 8 16">Maturation involves the enzymatic conversion of Ser into dehydrated AA and the formation of thioether bonds with cysteine, probably by RamC (PubMed:15277670). This is followed by membrane translocation and cleavage of the modified precursor (Probable). The RamS precursor protein (detected by an anti-propeptide antibody and by a C-terminal His-tag) is detected from at least 16 hours post-germination; its apparent molecular weight decreases starting from about 34 hours, when its probable modifying enzyme ramC is transcribed. Surfactin, a B.subtilis cyclic lipopeptide antibiotic which prevents aerial hyphae formation in S.coelicolor, decreases localization of RamS precursor protein to the cell membrane, suggesting that processing only occurs at the cell membrane (PubMed:22486809).</text>
</comment>
<comment type="mass spectrometry">
    <molecule>Lanthionine-containing peptide SapB</molecule>
</comment>
<comment type="mass spectrometry">
    <molecule>Lanthionine-containing peptide SapB</molecule>
</comment>
<comment type="mass spectrometry">
    <molecule>Lanthionine-containing peptide SapB</molecule>
    <text>On rich R5 medium.</text>
</comment>
<comment type="mass spectrometry">
    <molecule>Lanthionine-containing peptide SapB</molecule>
    <text>On rich MS medium.</text>
</comment>
<comment type="disruption phenotype">
    <text evidence="3 5 7">Single deletion of ramS leads to a severe delay in aerial hyphae growth (PubMed:12453210). Deletion of the ramC-ramS-ramA-ramB operon on rich medium leads to an initially bald (no aerial hyphae) phenotype; after 4 days develops a substantial aerial mycelium. Wild-type mycelium on minimal medium (PubMed:17462011, PubMed:22309453). No expression of SapB, normal expression of chaplins. A complete chaplin-negative plus ram-negative strain (deletion of ramR or the ramC-ramS-ramA-ramB operon) leads to the complete loss of robust aerial hyphae (PubMed:17462011).</text>
</comment>
<comment type="similarity">
    <text evidence="15">Belongs to the lanthionine-containing morphogen family.</text>
</comment>
<organism>
    <name type="scientific">Streptomyces coelicolor (strain ATCC BAA-471 / A3(2) / M145)</name>
    <dbReference type="NCBI Taxonomy" id="100226"/>
    <lineage>
        <taxon>Bacteria</taxon>
        <taxon>Bacillati</taxon>
        <taxon>Actinomycetota</taxon>
        <taxon>Actinomycetes</taxon>
        <taxon>Kitasatosporales</taxon>
        <taxon>Streptomycetaceae</taxon>
        <taxon>Streptomyces</taxon>
        <taxon>Streptomyces albidoflavus group</taxon>
    </lineage>
</organism>
<sequence>MNLFDLQSMETPKEEAMGDVETGSRASLLLCGDSSLSITTCN</sequence>
<evidence type="ECO:0000256" key="1">
    <source>
        <dbReference type="SAM" id="MobiDB-lite"/>
    </source>
</evidence>
<evidence type="ECO:0000269" key="2">
    <source>
    </source>
</evidence>
<evidence type="ECO:0000269" key="3">
    <source>
    </source>
</evidence>
<evidence type="ECO:0000269" key="4">
    <source>
    </source>
</evidence>
<evidence type="ECO:0000269" key="5">
    <source>
    </source>
</evidence>
<evidence type="ECO:0000269" key="6">
    <source>
    </source>
</evidence>
<evidence type="ECO:0000269" key="7">
    <source>
    </source>
</evidence>
<evidence type="ECO:0000269" key="8">
    <source>
    </source>
</evidence>
<evidence type="ECO:0000269" key="9">
    <source>
    </source>
</evidence>
<evidence type="ECO:0000269" key="10">
    <source>
    </source>
</evidence>
<evidence type="ECO:0000303" key="11">
    <source>
    </source>
</evidence>
<evidence type="ECO:0000303" key="12">
    <source>
    </source>
</evidence>
<evidence type="ECO:0000303" key="13">
    <source>
    </source>
</evidence>
<evidence type="ECO:0000303" key="14">
    <source>
    </source>
</evidence>
<evidence type="ECO:0000305" key="15"/>
<evidence type="ECO:0000305" key="16">
    <source>
    </source>
</evidence>
<evidence type="ECO:0000305" key="17">
    <source>
    </source>
</evidence>
<evidence type="ECO:0000305" key="18">
    <source>
    </source>
</evidence>
<keyword id="KW-1003">Cell membrane</keyword>
<keyword id="KW-0903">Direct protein sequencing</keyword>
<keyword id="KW-0472">Membrane</keyword>
<keyword id="KW-1185">Reference proteome</keyword>
<keyword id="KW-0964">Secreted</keyword>
<keyword id="KW-0883">Thioether bond</keyword>
<accession>O88038</accession>
<dbReference type="EMBL" id="AL939128">
    <property type="protein sequence ID" value="CAA19961.1"/>
    <property type="molecule type" value="Genomic_DNA"/>
</dbReference>
<dbReference type="PIR" id="T35181">
    <property type="entry name" value="T35181"/>
</dbReference>
<dbReference type="RefSeq" id="NP_630757.1">
    <property type="nucleotide sequence ID" value="NC_003888.3"/>
</dbReference>
<dbReference type="RefSeq" id="WP_003972313.1">
    <property type="nucleotide sequence ID" value="NZ_VNID01000002.1"/>
</dbReference>
<dbReference type="STRING" id="100226.gene:17764340"/>
<dbReference type="PaxDb" id="100226-SCO6682"/>
<dbReference type="KEGG" id="sco:SCO6682"/>
<dbReference type="PATRIC" id="fig|100226.15.peg.6787"/>
<dbReference type="eggNOG" id="ENOG502ZVDJ">
    <property type="taxonomic scope" value="Bacteria"/>
</dbReference>
<dbReference type="HOGENOM" id="CLU_212233_0_0_11"/>
<dbReference type="InParanoid" id="O88038"/>
<dbReference type="OrthoDB" id="3542079at2"/>
<dbReference type="Proteomes" id="UP000001973">
    <property type="component" value="Chromosome"/>
</dbReference>
<dbReference type="GO" id="GO:0005576">
    <property type="term" value="C:extracellular region"/>
    <property type="evidence" value="ECO:0007669"/>
    <property type="project" value="UniProtKB-SubCell"/>
</dbReference>
<dbReference type="GO" id="GO:0005886">
    <property type="term" value="C:plasma membrane"/>
    <property type="evidence" value="ECO:0007669"/>
    <property type="project" value="UniProtKB-SubCell"/>
</dbReference>
<dbReference type="GO" id="GO:0031160">
    <property type="term" value="C:spore wall"/>
    <property type="evidence" value="ECO:0007669"/>
    <property type="project" value="UniProtKB-SubCell"/>
</dbReference>
<dbReference type="InterPro" id="IPR045825">
    <property type="entry name" value="RamS"/>
</dbReference>
<dbReference type="NCBIfam" id="NF033212">
    <property type="entry name" value="SapB_AmfS_lanti"/>
    <property type="match status" value="1"/>
</dbReference>
<dbReference type="Pfam" id="PF19402">
    <property type="entry name" value="RamS"/>
    <property type="match status" value="1"/>
</dbReference>
<reference key="1">
    <citation type="journal article" date="2002" name="Nature">
        <title>Complete genome sequence of the model actinomycete Streptomyces coelicolor A3(2).</title>
        <authorList>
            <person name="Bentley S.D."/>
            <person name="Chater K.F."/>
            <person name="Cerdeno-Tarraga A.-M."/>
            <person name="Challis G.L."/>
            <person name="Thomson N.R."/>
            <person name="James K.D."/>
            <person name="Harris D.E."/>
            <person name="Quail M.A."/>
            <person name="Kieser H."/>
            <person name="Harper D."/>
            <person name="Bateman A."/>
            <person name="Brown S."/>
            <person name="Chandra G."/>
            <person name="Chen C.W."/>
            <person name="Collins M."/>
            <person name="Cronin A."/>
            <person name="Fraser A."/>
            <person name="Goble A."/>
            <person name="Hidalgo J."/>
            <person name="Hornsby T."/>
            <person name="Howarth S."/>
            <person name="Huang C.-H."/>
            <person name="Kieser T."/>
            <person name="Larke L."/>
            <person name="Murphy L.D."/>
            <person name="Oliver K."/>
            <person name="O'Neil S."/>
            <person name="Rabbinowitsch E."/>
            <person name="Rajandream M.A."/>
            <person name="Rutherford K.M."/>
            <person name="Rutter S."/>
            <person name="Seeger K."/>
            <person name="Saunders D."/>
            <person name="Sharp S."/>
            <person name="Squares R."/>
            <person name="Squares S."/>
            <person name="Taylor K."/>
            <person name="Warren T."/>
            <person name="Wietzorrek A."/>
            <person name="Woodward J.R."/>
            <person name="Barrell B.G."/>
            <person name="Parkhill J."/>
            <person name="Hopwood D.A."/>
        </authorList>
    </citation>
    <scope>NUCLEOTIDE SEQUENCE [LARGE SCALE GENOMIC DNA]</scope>
    <source>
        <strain>ATCC BAA-471 / A3(2) / M145</strain>
    </source>
</reference>
<reference key="2">
    <citation type="journal article" date="1991" name="Cell">
        <title>Extracellular complementation of a developmental mutation implicates a small sporulation protein in aerial mycelium formation by S. coelicolor.</title>
        <authorList>
            <person name="Willey J.M."/>
            <person name="Santamaria R."/>
            <person name="Guijarro J."/>
            <person name="Geistlich M."/>
            <person name="Losick R."/>
        </authorList>
    </citation>
    <scope>PROTEIN SEQUENCE OF 22-23</scope>
    <scope>FUNCTION</scope>
    <scope>SUBCELLULAR LOCATION</scope>
    <scope>DEVELOPMENTAL STAGE</scope>
    <scope>INDUCTION</scope>
    <scope>MASS SPECTROMETRY</scope>
    <source>
        <strain>A3(2) / J1501</strain>
    </source>
</reference>
<reference key="3">
    <citation type="journal article" date="2004" name="Proc. Natl. Acad. Sci. U.S.A.">
        <title>The SapB morphogen is a lantibiotic-like peptide derived from the product of the developmental gene ramS in Streptomyces coelicolor.</title>
        <authorList>
            <person name="Kodani S."/>
            <person name="Hudson M.E."/>
            <person name="Durrant M.C."/>
            <person name="Buttner M.J."/>
            <person name="Nodwell J.R."/>
            <person name="Willey J.M."/>
        </authorList>
    </citation>
    <scope>PROTEIN SEQUENCE OF 22-38</scope>
    <scope>IDENTIFICATION OF GENE</scope>
    <scope>FUNCTION</scope>
    <scope>MASS SPECTROMETRY</scope>
    <scope>DEHYDRATION AT SER-27 AND SER-37</scope>
    <scope>LANTHIONINE CROSS-LINKS</scope>
    <source>
        <strain>A3(2) / J1501</strain>
    </source>
</reference>
<reference key="4">
    <citation type="journal article" date="1988" name="J. Bacteriol.">
        <title>Promoter determining the timing and spatial localization of transcription of a cloned Streptomyces coelicolor gene encoding a spore-associated polypeptide.</title>
        <authorList>
            <person name="Guijarro J."/>
            <person name="Santamaria R."/>
            <person name="Schauer A."/>
            <person name="Losick R."/>
        </authorList>
    </citation>
    <scope>IDENTIFICATION</scope>
    <scope>NOMENCLATURE</scope>
    <scope>SUBCELLULAR LOCATION</scope>
    <scope>DEVELOPMENTAL STAGE</scope>
    <source>
        <strain>A3(2)</strain>
    </source>
</reference>
<reference key="5">
    <citation type="journal article" date="1998" name="Mol. Microbiol.">
        <title>A surface active protein involved in aerial hyphae formation in the filamentous fungus Schizophillum commune restores the capacity of a bald mutant of the filamentous bacterium Streptomyces coelicolor to erect aerial structures.</title>
        <authorList>
            <person name="Tillotson R.D."/>
            <person name="Woesten H.A."/>
            <person name="Richter M."/>
            <person name="Willey J.M."/>
        </authorList>
    </citation>
    <scope>FUNCTION</scope>
    <scope>SUBCELLULAR LOCATION</scope>
    <scope>DEVELOPMENTAL STAGE</scope>
    <source>
        <strain>A3(2) / J1501</strain>
    </source>
</reference>
<reference key="6">
    <citation type="journal article" date="2002" name="Mol. Microbiol.">
        <title>The ramC gene is required for morphogenesis in Streptomyces coelicolor and expressed in a cell type-specific manner under the direct control of RamR.</title>
        <authorList>
            <person name="O'Connor T.J."/>
            <person name="Kanellis P."/>
            <person name="Nodwell J.R."/>
        </authorList>
    </citation>
    <scope>OPERON</scope>
    <source>
        <strain>A3(2) / J1501</strain>
        <strain>ATCC BAA-471 / A3(2) / M145</strain>
    </source>
</reference>
<reference key="7">
    <citation type="journal article" date="2002" name="Mol. Microbiol.">
        <title>A central regulator of morphological differentiation in the multicellular bacterium Streptomyces coelicolor.</title>
        <authorList>
            <person name="Nguyen K.T."/>
            <person name="Willey J.M."/>
            <person name="Nguyen L.D."/>
            <person name="Nguyen L.T."/>
            <person name="Viollier P.H."/>
            <person name="Thompson C.J."/>
        </authorList>
    </citation>
    <scope>INDUCTION</scope>
    <scope>DISRUPTION PHENOTYPE</scope>
    <source>
        <strain>A3(2) / J1501</strain>
    </source>
</reference>
<reference key="8">
    <citation type="journal article" date="2007" name="Mol. Microbiol.">
        <title>SapB and the chaplins: connections between morphogenetic proteins in Streptomyces coelicolor.</title>
        <authorList>
            <person name="Capstick D.S."/>
            <person name="Willey J.M."/>
            <person name="Buttner M.J."/>
            <person name="Elliot M.A."/>
        </authorList>
    </citation>
    <scope>FUNCTION</scope>
    <scope>SUBCELLULAR LOCATION</scope>
    <scope>INDUCTION</scope>
    <scope>DISRUPTION PHENOTYPE</scope>
    <source>
        <strain>A3(2) / M600</strain>
    </source>
</reference>
<reference key="9">
    <citation type="journal article" date="2012" name="FEMS Microbiol. Lett.">
        <title>SapB and the rodlins are required for development of Streptomyces coelicolor in high osmolarity media.</title>
        <authorList>
            <person name="de Jong W."/>
            <person name="Vijgenboom E."/>
            <person name="Dijkhuizen L."/>
            <person name="Woesten H.A."/>
            <person name="Claessen D."/>
        </authorList>
    </citation>
    <scope>FUNCTION</scope>
    <scope>SUBCELLULAR LOCATION</scope>
    <scope>DEVELOPMENTAL STAGE</scope>
    <scope>INDUCTION BY HIGH OSMOLARITY</scope>
    <scope>MASS SPECTROMETRY</scope>
    <scope>DISRUPTION PHENOTYPE</scope>
    <source>
        <strain>ATCC BAA-471 / A3(2) / M145</strain>
    </source>
</reference>
<reference key="10">
    <citation type="journal article" date="2012" name="Mol. Microbiol.">
        <title>Multi-tier regulation of the streptomycete morphogenetic peptide SapB.</title>
        <authorList>
            <person name="Gaskell A.A."/>
            <person name="Giovinazzo J.A."/>
            <person name="Fonte V."/>
            <person name="Willey J.M."/>
        </authorList>
    </citation>
    <scope>FUNCTION</scope>
    <scope>IDENTIFICATION OF PRECURSOR</scope>
    <scope>SUBCELLULAR LOCATION</scope>
    <scope>INDUCTION</scope>
    <scope>PROCESSING</scope>
    <source>
        <strain>A3(2) / M600</strain>
    </source>
</reference>